<comment type="function">
    <text evidence="1">RING-finger E3 ubiquitin ligase that plays an important regulatory role during the initial stages of infection. Migrates to specific nuclear foci early in infection supposely to prepare the sites for viral replication by targeting and ubiquitinating host proteins.</text>
</comment>
<comment type="catalytic activity">
    <reaction>
        <text>S-ubiquitinyl-[E2 ubiquitin-conjugating enzyme]-L-cysteine + [acceptor protein]-L-lysine = [E2 ubiquitin-conjugating enzyme]-L-cysteine + N(6)-ubiquitinyl-[acceptor protein]-L-lysine.</text>
        <dbReference type="EC" id="2.3.2.27"/>
    </reaction>
</comment>
<comment type="subunit">
    <text evidence="1">Homooligomer.</text>
</comment>
<comment type="subcellular location">
    <subcellularLocation>
        <location evidence="1">Host nucleus</location>
    </subcellularLocation>
</comment>
<comment type="PTM">
    <text evidence="1">Auto-ubiquitinated.</text>
</comment>
<comment type="similarity">
    <text evidence="5">Belongs to the alphabaculovirus IE2 protein family.</text>
</comment>
<reference key="1">
    <citation type="journal article" date="2005" name="J. Gen. Virol.">
        <title>Analysis of the Choristoneura fumiferana nucleopolyhedrovirus genome.</title>
        <authorList>
            <person name="de Jong J.G."/>
            <person name="Lauzon H.A.M."/>
            <person name="Dominy C."/>
            <person name="Poloumienko A."/>
            <person name="Carstens E.B."/>
            <person name="Arif B.M."/>
            <person name="Krell P.J."/>
        </authorList>
    </citation>
    <scope>NUCLEOTIDE SEQUENCE [LARGE SCALE GENOMIC DNA]</scope>
</reference>
<evidence type="ECO:0000250" key="1">
    <source>
        <dbReference type="UniProtKB" id="O92503"/>
    </source>
</evidence>
<evidence type="ECO:0000255" key="2"/>
<evidence type="ECO:0000255" key="3">
    <source>
        <dbReference type="PROSITE-ProRule" id="PRU00175"/>
    </source>
</evidence>
<evidence type="ECO:0000256" key="4">
    <source>
        <dbReference type="SAM" id="MobiDB-lite"/>
    </source>
</evidence>
<evidence type="ECO:0000305" key="5"/>
<accession>Q8QME4</accession>
<dbReference type="EC" id="2.3.2.27"/>
<dbReference type="EMBL" id="AF512031">
    <property type="protein sequence ID" value="AAA67992.1"/>
    <property type="molecule type" value="Genomic_DNA"/>
</dbReference>
<dbReference type="RefSeq" id="NP_848453.1">
    <property type="nucleotide sequence ID" value="NC_004778.3"/>
</dbReference>
<dbReference type="KEGG" id="vg:1482775"/>
<dbReference type="OrthoDB" id="7654at10239"/>
<dbReference type="Proteomes" id="UP000204418">
    <property type="component" value="Genome"/>
</dbReference>
<dbReference type="GO" id="GO:0042025">
    <property type="term" value="C:host cell nucleus"/>
    <property type="evidence" value="ECO:0007669"/>
    <property type="project" value="UniProtKB-SubCell"/>
</dbReference>
<dbReference type="GO" id="GO:0016740">
    <property type="term" value="F:transferase activity"/>
    <property type="evidence" value="ECO:0007669"/>
    <property type="project" value="UniProtKB-KW"/>
</dbReference>
<dbReference type="GO" id="GO:0008270">
    <property type="term" value="F:zinc ion binding"/>
    <property type="evidence" value="ECO:0007669"/>
    <property type="project" value="UniProtKB-KW"/>
</dbReference>
<dbReference type="GO" id="GO:0039648">
    <property type="term" value="P:symbiont-mediated perturbation of host ubiquitin-like protein modification"/>
    <property type="evidence" value="ECO:0007669"/>
    <property type="project" value="UniProtKB-KW"/>
</dbReference>
<dbReference type="InterPro" id="IPR001841">
    <property type="entry name" value="Znf_RING"/>
</dbReference>
<dbReference type="InterPro" id="IPR017907">
    <property type="entry name" value="Znf_RING_CS"/>
</dbReference>
<dbReference type="SUPFAM" id="SSF57850">
    <property type="entry name" value="RING/U-box"/>
    <property type="match status" value="1"/>
</dbReference>
<dbReference type="PROSITE" id="PS00518">
    <property type="entry name" value="ZF_RING_1"/>
    <property type="match status" value="1"/>
</dbReference>
<dbReference type="PROSITE" id="PS50089">
    <property type="entry name" value="ZF_RING_2"/>
    <property type="match status" value="1"/>
</dbReference>
<feature type="chain" id="PRO_0000396079" description="E3 ubiquitin-protein ligase IE2">
    <location>
        <begin position="1"/>
        <end position="348"/>
    </location>
</feature>
<feature type="zinc finger region" description="RING-type" evidence="3">
    <location>
        <begin position="179"/>
        <end position="227"/>
    </location>
</feature>
<feature type="region of interest" description="Disordered" evidence="4">
    <location>
        <begin position="1"/>
        <end position="32"/>
    </location>
</feature>
<feature type="region of interest" description="Disordered" evidence="4">
    <location>
        <begin position="312"/>
        <end position="333"/>
    </location>
</feature>
<feature type="coiled-coil region" evidence="2">
    <location>
        <begin position="272"/>
        <end position="306"/>
    </location>
</feature>
<feature type="compositionally biased region" description="Polar residues" evidence="4">
    <location>
        <begin position="1"/>
        <end position="11"/>
    </location>
</feature>
<feature type="compositionally biased region" description="Basic residues" evidence="4">
    <location>
        <begin position="12"/>
        <end position="22"/>
    </location>
</feature>
<feature type="compositionally biased region" description="Low complexity" evidence="4">
    <location>
        <begin position="316"/>
        <end position="333"/>
    </location>
</feature>
<name>VIE2_NPVCF</name>
<keyword id="KW-0175">Coiled coil</keyword>
<keyword id="KW-0244">Early protein</keyword>
<keyword id="KW-1048">Host nucleus</keyword>
<keyword id="KW-0945">Host-virus interaction</keyword>
<keyword id="KW-0479">Metal-binding</keyword>
<keyword id="KW-1128">Modulation of host ubiquitin pathway by viral E3 ligase</keyword>
<keyword id="KW-1130">Modulation of host ubiquitin pathway by virus</keyword>
<keyword id="KW-1185">Reference proteome</keyword>
<keyword id="KW-0808">Transferase</keyword>
<keyword id="KW-0832">Ubl conjugation</keyword>
<keyword id="KW-0833">Ubl conjugation pathway</keyword>
<keyword id="KW-0862">Zinc</keyword>
<keyword id="KW-0863">Zinc-finger</keyword>
<sequence>MSRQINANTPVSRRRSGLRGRRLSYSPEDAVPTPAPRFSILEARRAADRPAEERMRAWHVIGDTSEPVTLRFVHNNAQYTVHGNAPFNTADFQEERDSQETEAANRAHQRAVHLHEHLHEVQETAAPLPNYSPVHSPDLTVMEDLETPRQRFETMFHAVDAESEDEAVPLPQVDMAVFCHICSCFFTDIKNYNSSFVTTSECNHAVCFKCYTSIMFDKELFKCSMCNRATPTCRVYNHKGFVELLPTRAVRDKQAIKTHWAQLLDNNMSDSKVPEQNDVQKLQAELAELRAEMASMRAEMASKQLGATMALENRRGSSSSGASSSSTSTSSSSSSSWLWECLLNTRNY</sequence>
<organismHost>
    <name type="scientific">Choristoneura fumiferana</name>
    <name type="common">Spruce budworm moth</name>
    <name type="synonym">Archips fumiferana</name>
    <dbReference type="NCBI Taxonomy" id="7141"/>
</organismHost>
<protein>
    <recommendedName>
        <fullName>E3 ubiquitin-protein ligase IE2</fullName>
        <ecNumber>2.3.2.27</ecNumber>
    </recommendedName>
    <alternativeName>
        <fullName>Immediate-early protein IE2</fullName>
    </alternativeName>
    <alternativeName>
        <fullName>RING-type E3 ubiquitin transferase IE2</fullName>
    </alternativeName>
</protein>
<organism>
    <name type="scientific">Choristoneura fumiferana nuclear polyhedrosis virus</name>
    <name type="common">CfMNPV</name>
    <dbReference type="NCBI Taxonomy" id="208973"/>
    <lineage>
        <taxon>Viruses</taxon>
        <taxon>Viruses incertae sedis</taxon>
        <taxon>Naldaviricetes</taxon>
        <taxon>Lefavirales</taxon>
        <taxon>Baculoviridae</taxon>
        <taxon>Alphabaculovirus</taxon>
        <taxon>Alphabaculovirus chofumiferanae</taxon>
    </lineage>
</organism>
<proteinExistence type="inferred from homology"/>
<gene>
    <name type="primary">IE2</name>
</gene>